<keyword id="KW-0067">ATP-binding</keyword>
<keyword id="KW-0436">Ligase</keyword>
<keyword id="KW-0547">Nucleotide-binding</keyword>
<keyword id="KW-0648">Protein biosynthesis</keyword>
<keyword id="KW-1185">Reference proteome</keyword>
<reference key="1">
    <citation type="submission" date="2004-06" db="EMBL/GenBank/DDBJ databases">
        <authorList>
            <person name="Birren B.W."/>
            <person name="Stange-Thomann N."/>
            <person name="Hafez N."/>
            <person name="DeCaprio D."/>
            <person name="Fisher S."/>
            <person name="Butler J."/>
            <person name="Elkins T."/>
            <person name="Kodira C.D."/>
            <person name="Major J."/>
            <person name="Wang S."/>
            <person name="Nicol R."/>
            <person name="Nusbaum C."/>
        </authorList>
    </citation>
    <scope>NUCLEOTIDE SEQUENCE [LARGE SCALE GENOMIC DNA]</scope>
    <source>
        <strain>ATCC 33453 / NBRC 100688 / NCTC 11704 / L1</strain>
    </source>
</reference>
<accession>Q6F1V4</accession>
<comment type="function">
    <text evidence="1">Allows the formation of correctly charged Asn-tRNA(Asn) or Gln-tRNA(Gln) through the transamidation of misacylated Asp-tRNA(Asn) or Glu-tRNA(Gln) in organisms which lack either or both of asparaginyl-tRNA or glutaminyl-tRNA synthetases. The reaction takes place in the presence of glutamine and ATP through an activated phospho-Asp-tRNA(Asn) or phospho-Glu-tRNA(Gln).</text>
</comment>
<comment type="catalytic activity">
    <reaction evidence="1">
        <text>L-glutamyl-tRNA(Gln) + L-glutamine + ATP + H2O = L-glutaminyl-tRNA(Gln) + L-glutamate + ADP + phosphate + H(+)</text>
        <dbReference type="Rhea" id="RHEA:17521"/>
        <dbReference type="Rhea" id="RHEA-COMP:9681"/>
        <dbReference type="Rhea" id="RHEA-COMP:9684"/>
        <dbReference type="ChEBI" id="CHEBI:15377"/>
        <dbReference type="ChEBI" id="CHEBI:15378"/>
        <dbReference type="ChEBI" id="CHEBI:29985"/>
        <dbReference type="ChEBI" id="CHEBI:30616"/>
        <dbReference type="ChEBI" id="CHEBI:43474"/>
        <dbReference type="ChEBI" id="CHEBI:58359"/>
        <dbReference type="ChEBI" id="CHEBI:78520"/>
        <dbReference type="ChEBI" id="CHEBI:78521"/>
        <dbReference type="ChEBI" id="CHEBI:456216"/>
    </reaction>
</comment>
<comment type="catalytic activity">
    <reaction evidence="1">
        <text>L-aspartyl-tRNA(Asn) + L-glutamine + ATP + H2O = L-asparaginyl-tRNA(Asn) + L-glutamate + ADP + phosphate + 2 H(+)</text>
        <dbReference type="Rhea" id="RHEA:14513"/>
        <dbReference type="Rhea" id="RHEA-COMP:9674"/>
        <dbReference type="Rhea" id="RHEA-COMP:9677"/>
        <dbReference type="ChEBI" id="CHEBI:15377"/>
        <dbReference type="ChEBI" id="CHEBI:15378"/>
        <dbReference type="ChEBI" id="CHEBI:29985"/>
        <dbReference type="ChEBI" id="CHEBI:30616"/>
        <dbReference type="ChEBI" id="CHEBI:43474"/>
        <dbReference type="ChEBI" id="CHEBI:58359"/>
        <dbReference type="ChEBI" id="CHEBI:78515"/>
        <dbReference type="ChEBI" id="CHEBI:78516"/>
        <dbReference type="ChEBI" id="CHEBI:456216"/>
    </reaction>
</comment>
<comment type="subunit">
    <text evidence="1">Heterotrimer of A, B and C subunits.</text>
</comment>
<comment type="similarity">
    <text evidence="1">Belongs to the GatB/GatE family. GatB subfamily.</text>
</comment>
<proteinExistence type="inferred from homology"/>
<gene>
    <name evidence="1" type="primary">gatB</name>
    <name type="ordered locus">Mfl163</name>
</gene>
<sequence>MRNFEIVIGIENHVELKTKSKMFSSAPVSYGETPNTNVNETDMAYPGSLPTINKKGIELAIRTCNALNMEIDTLVKFDRKNYFYPDLTKGYQITQQYNPIGKNGKLNINVNGLTKEVDIERLHMEEDTAKQIHKDDLTYIDYNRAGTGLVEIVTRPVLRSADEACAYVEKLREVLLFLKVSDVKMNEGSLRTDVNISIRPFGTQEFSNKVEVKNLNSISNIKKAIEFEVERQTKLMLNNEIIIQETRRFDDTTNSTVSMRSKSDALDYKYFREPNIMPIQLKKEWVEDCIKNSPELADIKRIKYVNDYKISINDANIILTSIEMTEFFEETIKFTNNYTKVANILISDIQAQLNNENTTIDKLALLPSHLAEMINLVDQSVISSKHTKTILPIIMKDSSKSVIEIVEELNIKMISDENEIANLVNPIIESNLELLEQYSERPERVTKTIMGQLMKVTGGNVNPEAGMNIIIKLVENKIK</sequence>
<dbReference type="EC" id="6.3.5.-" evidence="1"/>
<dbReference type="EMBL" id="AE017263">
    <property type="protein sequence ID" value="AAT75519.1"/>
    <property type="molecule type" value="Genomic_DNA"/>
</dbReference>
<dbReference type="RefSeq" id="WP_011183060.1">
    <property type="nucleotide sequence ID" value="NC_006055.1"/>
</dbReference>
<dbReference type="RefSeq" id="YP_053403.1">
    <property type="nucleotide sequence ID" value="NC_006055.1"/>
</dbReference>
<dbReference type="SMR" id="Q6F1V4"/>
<dbReference type="STRING" id="265311.Mfl163"/>
<dbReference type="PaxDb" id="265311-Mfl163"/>
<dbReference type="EnsemblBacteria" id="AAT75519">
    <property type="protein sequence ID" value="AAT75519"/>
    <property type="gene ID" value="Mfl163"/>
</dbReference>
<dbReference type="GeneID" id="2897853"/>
<dbReference type="KEGG" id="mfl:Mfl163"/>
<dbReference type="PATRIC" id="fig|265311.5.peg.164"/>
<dbReference type="eggNOG" id="COG0064">
    <property type="taxonomic scope" value="Bacteria"/>
</dbReference>
<dbReference type="HOGENOM" id="CLU_019240_0_0_14"/>
<dbReference type="OrthoDB" id="9804078at2"/>
<dbReference type="Proteomes" id="UP000006647">
    <property type="component" value="Chromosome"/>
</dbReference>
<dbReference type="GO" id="GO:0050566">
    <property type="term" value="F:asparaginyl-tRNA synthase (glutamine-hydrolyzing) activity"/>
    <property type="evidence" value="ECO:0007669"/>
    <property type="project" value="RHEA"/>
</dbReference>
<dbReference type="GO" id="GO:0005524">
    <property type="term" value="F:ATP binding"/>
    <property type="evidence" value="ECO:0007669"/>
    <property type="project" value="UniProtKB-KW"/>
</dbReference>
<dbReference type="GO" id="GO:0050567">
    <property type="term" value="F:glutaminyl-tRNA synthase (glutamine-hydrolyzing) activity"/>
    <property type="evidence" value="ECO:0007669"/>
    <property type="project" value="UniProtKB-UniRule"/>
</dbReference>
<dbReference type="GO" id="GO:0070681">
    <property type="term" value="P:glutaminyl-tRNAGln biosynthesis via transamidation"/>
    <property type="evidence" value="ECO:0007669"/>
    <property type="project" value="TreeGrafter"/>
</dbReference>
<dbReference type="GO" id="GO:0006412">
    <property type="term" value="P:translation"/>
    <property type="evidence" value="ECO:0007669"/>
    <property type="project" value="UniProtKB-UniRule"/>
</dbReference>
<dbReference type="Gene3D" id="1.10.10.410">
    <property type="match status" value="1"/>
</dbReference>
<dbReference type="Gene3D" id="1.10.150.380">
    <property type="entry name" value="GatB domain, N-terminal subdomain"/>
    <property type="match status" value="1"/>
</dbReference>
<dbReference type="HAMAP" id="MF_00121">
    <property type="entry name" value="GatB"/>
    <property type="match status" value="1"/>
</dbReference>
<dbReference type="InterPro" id="IPR017959">
    <property type="entry name" value="Asn/Gln-tRNA_amidoTrfase_suB/E"/>
</dbReference>
<dbReference type="InterPro" id="IPR006075">
    <property type="entry name" value="Asn/Gln-tRNA_Trfase_suB/E_cat"/>
</dbReference>
<dbReference type="InterPro" id="IPR018027">
    <property type="entry name" value="Asn/Gln_amidotransferase"/>
</dbReference>
<dbReference type="InterPro" id="IPR003789">
    <property type="entry name" value="Asn/Gln_tRNA_amidoTrase-B-like"/>
</dbReference>
<dbReference type="InterPro" id="IPR004413">
    <property type="entry name" value="GatB"/>
</dbReference>
<dbReference type="InterPro" id="IPR042114">
    <property type="entry name" value="GatB_C_1"/>
</dbReference>
<dbReference type="InterPro" id="IPR023168">
    <property type="entry name" value="GatB_Yqey_C_2"/>
</dbReference>
<dbReference type="InterPro" id="IPR017958">
    <property type="entry name" value="Gln-tRNA_amidoTrfase_suB_CS"/>
</dbReference>
<dbReference type="InterPro" id="IPR014746">
    <property type="entry name" value="Gln_synth/guanido_kin_cat_dom"/>
</dbReference>
<dbReference type="NCBIfam" id="TIGR00133">
    <property type="entry name" value="gatB"/>
    <property type="match status" value="1"/>
</dbReference>
<dbReference type="NCBIfam" id="NF004012">
    <property type="entry name" value="PRK05477.1-2"/>
    <property type="match status" value="1"/>
</dbReference>
<dbReference type="NCBIfam" id="NF004014">
    <property type="entry name" value="PRK05477.1-4"/>
    <property type="match status" value="1"/>
</dbReference>
<dbReference type="PANTHER" id="PTHR11659">
    <property type="entry name" value="GLUTAMYL-TRNA GLN AMIDOTRANSFERASE SUBUNIT B MITOCHONDRIAL AND PROKARYOTIC PET112-RELATED"/>
    <property type="match status" value="1"/>
</dbReference>
<dbReference type="PANTHER" id="PTHR11659:SF0">
    <property type="entry name" value="GLUTAMYL-TRNA(GLN) AMIDOTRANSFERASE SUBUNIT B, MITOCHONDRIAL"/>
    <property type="match status" value="1"/>
</dbReference>
<dbReference type="Pfam" id="PF02934">
    <property type="entry name" value="GatB_N"/>
    <property type="match status" value="1"/>
</dbReference>
<dbReference type="Pfam" id="PF02637">
    <property type="entry name" value="GatB_Yqey"/>
    <property type="match status" value="1"/>
</dbReference>
<dbReference type="SMART" id="SM00845">
    <property type="entry name" value="GatB_Yqey"/>
    <property type="match status" value="1"/>
</dbReference>
<dbReference type="SUPFAM" id="SSF89095">
    <property type="entry name" value="GatB/YqeY motif"/>
    <property type="match status" value="1"/>
</dbReference>
<dbReference type="SUPFAM" id="SSF55931">
    <property type="entry name" value="Glutamine synthetase/guanido kinase"/>
    <property type="match status" value="1"/>
</dbReference>
<dbReference type="PROSITE" id="PS01234">
    <property type="entry name" value="GATB"/>
    <property type="match status" value="1"/>
</dbReference>
<evidence type="ECO:0000255" key="1">
    <source>
        <dbReference type="HAMAP-Rule" id="MF_00121"/>
    </source>
</evidence>
<name>GATB_MESFL</name>
<feature type="chain" id="PRO_0000241237" description="Aspartyl/glutamyl-tRNA(Asn/Gln) amidotransferase subunit B">
    <location>
        <begin position="1"/>
        <end position="479"/>
    </location>
</feature>
<protein>
    <recommendedName>
        <fullName evidence="1">Aspartyl/glutamyl-tRNA(Asn/Gln) amidotransferase subunit B</fullName>
        <shortName evidence="1">Asp/Glu-ADT subunit B</shortName>
        <ecNumber evidence="1">6.3.5.-</ecNumber>
    </recommendedName>
</protein>
<organism>
    <name type="scientific">Mesoplasma florum (strain ATCC 33453 / NBRC 100688 / NCTC 11704 / L1)</name>
    <name type="common">Acholeplasma florum</name>
    <dbReference type="NCBI Taxonomy" id="265311"/>
    <lineage>
        <taxon>Bacteria</taxon>
        <taxon>Bacillati</taxon>
        <taxon>Mycoplasmatota</taxon>
        <taxon>Mollicutes</taxon>
        <taxon>Entomoplasmatales</taxon>
        <taxon>Entomoplasmataceae</taxon>
        <taxon>Mesoplasma</taxon>
    </lineage>
</organism>